<reference key="1">
    <citation type="journal article" date="2006" name="J. Bacteriol.">
        <title>Comparative genomic evidence for a close relationship between the dimorphic prosthecate bacteria Hyphomonas neptunium and Caulobacter crescentus.</title>
        <authorList>
            <person name="Badger J.H."/>
            <person name="Hoover T.R."/>
            <person name="Brun Y.V."/>
            <person name="Weiner R.M."/>
            <person name="Laub M.T."/>
            <person name="Alexandre G."/>
            <person name="Mrazek J."/>
            <person name="Ren Q."/>
            <person name="Paulsen I.T."/>
            <person name="Nelson K.E."/>
            <person name="Khouri H.M."/>
            <person name="Radune D."/>
            <person name="Sosa J."/>
            <person name="Dodson R.J."/>
            <person name="Sullivan S.A."/>
            <person name="Rosovitz M.J."/>
            <person name="Madupu R."/>
            <person name="Brinkac L.M."/>
            <person name="Durkin A.S."/>
            <person name="Daugherty S.C."/>
            <person name="Kothari S.P."/>
            <person name="Giglio M.G."/>
            <person name="Zhou L."/>
            <person name="Haft D.H."/>
            <person name="Selengut J.D."/>
            <person name="Davidsen T.M."/>
            <person name="Yang Q."/>
            <person name="Zafar N."/>
            <person name="Ward N.L."/>
        </authorList>
    </citation>
    <scope>NUCLEOTIDE SEQUENCE [LARGE SCALE GENOMIC DNA]</scope>
    <source>
        <strain>ATCC 15444</strain>
    </source>
</reference>
<gene>
    <name evidence="1" type="primary">cysS</name>
    <name type="ordered locus">HNE_3201</name>
</gene>
<organism>
    <name type="scientific">Hyphomonas neptunium (strain ATCC 15444)</name>
    <dbReference type="NCBI Taxonomy" id="228405"/>
    <lineage>
        <taxon>Bacteria</taxon>
        <taxon>Pseudomonadati</taxon>
        <taxon>Pseudomonadota</taxon>
        <taxon>Alphaproteobacteria</taxon>
        <taxon>Hyphomonadales</taxon>
        <taxon>Hyphomonadaceae</taxon>
        <taxon>Hyphomonas</taxon>
    </lineage>
</organism>
<name>SYC_HYPNA</name>
<accession>Q0BXB7</accession>
<feature type="chain" id="PRO_1000006590" description="Cysteine--tRNA ligase">
    <location>
        <begin position="1"/>
        <end position="461"/>
    </location>
</feature>
<feature type="short sequence motif" description="'HIGH' region">
    <location>
        <begin position="31"/>
        <end position="41"/>
    </location>
</feature>
<feature type="short sequence motif" description="'KMSKS' region">
    <location>
        <begin position="271"/>
        <end position="275"/>
    </location>
</feature>
<feature type="binding site" evidence="1">
    <location>
        <position position="29"/>
    </location>
    <ligand>
        <name>Zn(2+)</name>
        <dbReference type="ChEBI" id="CHEBI:29105"/>
    </ligand>
</feature>
<feature type="binding site" evidence="1">
    <location>
        <position position="214"/>
    </location>
    <ligand>
        <name>Zn(2+)</name>
        <dbReference type="ChEBI" id="CHEBI:29105"/>
    </ligand>
</feature>
<feature type="binding site" evidence="1">
    <location>
        <position position="239"/>
    </location>
    <ligand>
        <name>Zn(2+)</name>
        <dbReference type="ChEBI" id="CHEBI:29105"/>
    </ligand>
</feature>
<feature type="binding site" evidence="1">
    <location>
        <position position="243"/>
    </location>
    <ligand>
        <name>Zn(2+)</name>
        <dbReference type="ChEBI" id="CHEBI:29105"/>
    </ligand>
</feature>
<feature type="binding site" evidence="1">
    <location>
        <position position="274"/>
    </location>
    <ligand>
        <name>ATP</name>
        <dbReference type="ChEBI" id="CHEBI:30616"/>
    </ligand>
</feature>
<keyword id="KW-0030">Aminoacyl-tRNA synthetase</keyword>
<keyword id="KW-0067">ATP-binding</keyword>
<keyword id="KW-0963">Cytoplasm</keyword>
<keyword id="KW-0436">Ligase</keyword>
<keyword id="KW-0479">Metal-binding</keyword>
<keyword id="KW-0547">Nucleotide-binding</keyword>
<keyword id="KW-0648">Protein biosynthesis</keyword>
<keyword id="KW-1185">Reference proteome</keyword>
<keyword id="KW-0862">Zinc</keyword>
<comment type="catalytic activity">
    <reaction evidence="1">
        <text>tRNA(Cys) + L-cysteine + ATP = L-cysteinyl-tRNA(Cys) + AMP + diphosphate</text>
        <dbReference type="Rhea" id="RHEA:17773"/>
        <dbReference type="Rhea" id="RHEA-COMP:9661"/>
        <dbReference type="Rhea" id="RHEA-COMP:9679"/>
        <dbReference type="ChEBI" id="CHEBI:30616"/>
        <dbReference type="ChEBI" id="CHEBI:33019"/>
        <dbReference type="ChEBI" id="CHEBI:35235"/>
        <dbReference type="ChEBI" id="CHEBI:78442"/>
        <dbReference type="ChEBI" id="CHEBI:78517"/>
        <dbReference type="ChEBI" id="CHEBI:456215"/>
        <dbReference type="EC" id="6.1.1.16"/>
    </reaction>
</comment>
<comment type="cofactor">
    <cofactor evidence="1">
        <name>Zn(2+)</name>
        <dbReference type="ChEBI" id="CHEBI:29105"/>
    </cofactor>
    <text evidence="1">Binds 1 zinc ion per subunit.</text>
</comment>
<comment type="subunit">
    <text evidence="1">Monomer.</text>
</comment>
<comment type="subcellular location">
    <subcellularLocation>
        <location evidence="1">Cytoplasm</location>
    </subcellularLocation>
</comment>
<comment type="similarity">
    <text evidence="1">Belongs to the class-I aminoacyl-tRNA synthetase family.</text>
</comment>
<dbReference type="EC" id="6.1.1.16" evidence="1"/>
<dbReference type="EMBL" id="CP000158">
    <property type="protein sequence ID" value="ABI76262.1"/>
    <property type="molecule type" value="Genomic_DNA"/>
</dbReference>
<dbReference type="RefSeq" id="WP_011648172.1">
    <property type="nucleotide sequence ID" value="NC_008358.1"/>
</dbReference>
<dbReference type="SMR" id="Q0BXB7"/>
<dbReference type="STRING" id="228405.HNE_3201"/>
<dbReference type="KEGG" id="hne:HNE_3201"/>
<dbReference type="eggNOG" id="COG0215">
    <property type="taxonomic scope" value="Bacteria"/>
</dbReference>
<dbReference type="HOGENOM" id="CLU_013528_0_1_5"/>
<dbReference type="Proteomes" id="UP000001959">
    <property type="component" value="Chromosome"/>
</dbReference>
<dbReference type="GO" id="GO:0005829">
    <property type="term" value="C:cytosol"/>
    <property type="evidence" value="ECO:0007669"/>
    <property type="project" value="TreeGrafter"/>
</dbReference>
<dbReference type="GO" id="GO:0005524">
    <property type="term" value="F:ATP binding"/>
    <property type="evidence" value="ECO:0007669"/>
    <property type="project" value="UniProtKB-UniRule"/>
</dbReference>
<dbReference type="GO" id="GO:0004817">
    <property type="term" value="F:cysteine-tRNA ligase activity"/>
    <property type="evidence" value="ECO:0007669"/>
    <property type="project" value="UniProtKB-UniRule"/>
</dbReference>
<dbReference type="GO" id="GO:0008270">
    <property type="term" value="F:zinc ion binding"/>
    <property type="evidence" value="ECO:0007669"/>
    <property type="project" value="UniProtKB-UniRule"/>
</dbReference>
<dbReference type="GO" id="GO:0006423">
    <property type="term" value="P:cysteinyl-tRNA aminoacylation"/>
    <property type="evidence" value="ECO:0007669"/>
    <property type="project" value="UniProtKB-UniRule"/>
</dbReference>
<dbReference type="CDD" id="cd00672">
    <property type="entry name" value="CysRS_core"/>
    <property type="match status" value="1"/>
</dbReference>
<dbReference type="FunFam" id="3.40.50.620:FF:000068">
    <property type="entry name" value="Cysteine--tRNA ligase"/>
    <property type="match status" value="1"/>
</dbReference>
<dbReference type="Gene3D" id="1.20.120.1910">
    <property type="entry name" value="Cysteine-tRNA ligase, C-terminal anti-codon recognition domain"/>
    <property type="match status" value="1"/>
</dbReference>
<dbReference type="Gene3D" id="3.40.50.620">
    <property type="entry name" value="HUPs"/>
    <property type="match status" value="1"/>
</dbReference>
<dbReference type="HAMAP" id="MF_00041">
    <property type="entry name" value="Cys_tRNA_synth"/>
    <property type="match status" value="1"/>
</dbReference>
<dbReference type="InterPro" id="IPR015803">
    <property type="entry name" value="Cys-tRNA-ligase"/>
</dbReference>
<dbReference type="InterPro" id="IPR015273">
    <property type="entry name" value="Cys-tRNA-synt_Ia_DALR"/>
</dbReference>
<dbReference type="InterPro" id="IPR024909">
    <property type="entry name" value="Cys-tRNA/MSH_ligase"/>
</dbReference>
<dbReference type="InterPro" id="IPR056411">
    <property type="entry name" value="CysS_C"/>
</dbReference>
<dbReference type="InterPro" id="IPR014729">
    <property type="entry name" value="Rossmann-like_a/b/a_fold"/>
</dbReference>
<dbReference type="InterPro" id="IPR032678">
    <property type="entry name" value="tRNA-synt_1_cat_dom"/>
</dbReference>
<dbReference type="InterPro" id="IPR009080">
    <property type="entry name" value="tRNAsynth_Ia_anticodon-bd"/>
</dbReference>
<dbReference type="NCBIfam" id="TIGR00435">
    <property type="entry name" value="cysS"/>
    <property type="match status" value="1"/>
</dbReference>
<dbReference type="PANTHER" id="PTHR10890:SF3">
    <property type="entry name" value="CYSTEINE--TRNA LIGASE, CYTOPLASMIC"/>
    <property type="match status" value="1"/>
</dbReference>
<dbReference type="PANTHER" id="PTHR10890">
    <property type="entry name" value="CYSTEINYL-TRNA SYNTHETASE"/>
    <property type="match status" value="1"/>
</dbReference>
<dbReference type="Pfam" id="PF23493">
    <property type="entry name" value="CysS_C"/>
    <property type="match status" value="1"/>
</dbReference>
<dbReference type="Pfam" id="PF09190">
    <property type="entry name" value="DALR_2"/>
    <property type="match status" value="1"/>
</dbReference>
<dbReference type="Pfam" id="PF01406">
    <property type="entry name" value="tRNA-synt_1e"/>
    <property type="match status" value="1"/>
</dbReference>
<dbReference type="PRINTS" id="PR00983">
    <property type="entry name" value="TRNASYNTHCYS"/>
</dbReference>
<dbReference type="SMART" id="SM00840">
    <property type="entry name" value="DALR_2"/>
    <property type="match status" value="1"/>
</dbReference>
<dbReference type="SUPFAM" id="SSF47323">
    <property type="entry name" value="Anticodon-binding domain of a subclass of class I aminoacyl-tRNA synthetases"/>
    <property type="match status" value="1"/>
</dbReference>
<dbReference type="SUPFAM" id="SSF52374">
    <property type="entry name" value="Nucleotidylyl transferase"/>
    <property type="match status" value="1"/>
</dbReference>
<protein>
    <recommendedName>
        <fullName evidence="1">Cysteine--tRNA ligase</fullName>
        <ecNumber evidence="1">6.1.1.16</ecNumber>
    </recommendedName>
    <alternativeName>
        <fullName evidence="1">Cysteinyl-tRNA synthetase</fullName>
        <shortName evidence="1">CysRS</shortName>
    </alternativeName>
</protein>
<proteinExistence type="inferred from homology"/>
<sequence>MTLRIYDTAARKKRVFEPQDAKRVTLYVCGPTVYNYAHIGNARPPVVFDVLRRVLMARYGEDAIVYARNITDIEDKIIAASVASGEPISAITQKYAAIYNADVEALNVIAPTIEPWATGHVPEMIEIIEKLIRKKYAYVGDTGVWFSVPSMPDYGRLSGRKPEDNEAGARVAVDEDKRDPSDFALWKFAKPGEPEDAIWDSPWGRGRPGWHIECSAMAAKHLGRTIDIHGGGVDLTFPHHENEIAQSECAHGEELARYWMHNGFLDMGGEKMSKSLGNVVTVHDLLKAWPGEVLRFALLTAHYRAQLDWTEDLLKQAKTTLDRIYGALRRVWEADGGEARDTGVLRALEDDLGTPDALAELARLASEANTAADLKDAVAMANGRANLLAAGKLLGLLTKTPKEWEQGADTDENSRIDAQVQARVDARVAKDWAEADRIRKALAEEGVEIMDGPAGSTWRRI</sequence>
<evidence type="ECO:0000255" key="1">
    <source>
        <dbReference type="HAMAP-Rule" id="MF_00041"/>
    </source>
</evidence>